<evidence type="ECO:0000255" key="1">
    <source>
        <dbReference type="HAMAP-Rule" id="MF_00362"/>
    </source>
</evidence>
<evidence type="ECO:0000305" key="2"/>
<proteinExistence type="inferred from homology"/>
<sequence length="174" mass="18905">MNRTEKEQVIGELHEKMAKAKAAIVAEPKGLNVAVVTDLRKKLRDAKIDYRIVKNTLAARAAKGTPVEPVADRFVGPTALVMSYDDVVTPAKLLADFMKDRENFVIRTAIIEGKVIDAKGVQALAKMPGLKELRGQIAAMIAQPATKLARLVGTPGQQLARVVGARREQLEKQG</sequence>
<keyword id="KW-0687">Ribonucleoprotein</keyword>
<keyword id="KW-0689">Ribosomal protein</keyword>
<keyword id="KW-0694">RNA-binding</keyword>
<keyword id="KW-0699">rRNA-binding</keyword>
<comment type="function">
    <text evidence="1">Forms part of the ribosomal stalk, playing a central role in the interaction of the ribosome with GTP-bound translation factors.</text>
</comment>
<comment type="subunit">
    <text evidence="1">Part of the ribosomal stalk of the 50S ribosomal subunit. The N-terminus interacts with L11 and the large rRNA to form the base of the stalk. The C-terminus forms an elongated spine to which L12 dimers bind in a sequential fashion forming a multimeric L10(L12)X complex.</text>
</comment>
<comment type="similarity">
    <text evidence="1">Belongs to the universal ribosomal protein uL10 family.</text>
</comment>
<gene>
    <name evidence="1" type="primary">rplJ</name>
    <name type="ordered locus">AnaeK_2273</name>
</gene>
<reference key="1">
    <citation type="submission" date="2008-08" db="EMBL/GenBank/DDBJ databases">
        <title>Complete sequence of Anaeromyxobacter sp. K.</title>
        <authorList>
            <consortium name="US DOE Joint Genome Institute"/>
            <person name="Lucas S."/>
            <person name="Copeland A."/>
            <person name="Lapidus A."/>
            <person name="Glavina del Rio T."/>
            <person name="Dalin E."/>
            <person name="Tice H."/>
            <person name="Bruce D."/>
            <person name="Goodwin L."/>
            <person name="Pitluck S."/>
            <person name="Saunders E."/>
            <person name="Brettin T."/>
            <person name="Detter J.C."/>
            <person name="Han C."/>
            <person name="Larimer F."/>
            <person name="Land M."/>
            <person name="Hauser L."/>
            <person name="Kyrpides N."/>
            <person name="Ovchinnikiva G."/>
            <person name="Beliaev A."/>
        </authorList>
    </citation>
    <scope>NUCLEOTIDE SEQUENCE [LARGE SCALE GENOMIC DNA]</scope>
    <source>
        <strain>K</strain>
    </source>
</reference>
<name>RL10_ANASK</name>
<protein>
    <recommendedName>
        <fullName evidence="1">Large ribosomal subunit protein uL10</fullName>
    </recommendedName>
    <alternativeName>
        <fullName evidence="2">50S ribosomal protein L10</fullName>
    </alternativeName>
</protein>
<feature type="chain" id="PRO_1000120912" description="Large ribosomal subunit protein uL10">
    <location>
        <begin position="1"/>
        <end position="174"/>
    </location>
</feature>
<accession>B4UDT4</accession>
<dbReference type="EMBL" id="CP001131">
    <property type="protein sequence ID" value="ACG73500.1"/>
    <property type="molecule type" value="Genomic_DNA"/>
</dbReference>
<dbReference type="RefSeq" id="WP_012526297.1">
    <property type="nucleotide sequence ID" value="NC_011145.1"/>
</dbReference>
<dbReference type="SMR" id="B4UDT4"/>
<dbReference type="KEGG" id="ank:AnaeK_2273"/>
<dbReference type="HOGENOM" id="CLU_092227_0_0_7"/>
<dbReference type="OrthoDB" id="3186107at2"/>
<dbReference type="Proteomes" id="UP000001871">
    <property type="component" value="Chromosome"/>
</dbReference>
<dbReference type="GO" id="GO:1990904">
    <property type="term" value="C:ribonucleoprotein complex"/>
    <property type="evidence" value="ECO:0007669"/>
    <property type="project" value="UniProtKB-KW"/>
</dbReference>
<dbReference type="GO" id="GO:0005840">
    <property type="term" value="C:ribosome"/>
    <property type="evidence" value="ECO:0007669"/>
    <property type="project" value="UniProtKB-KW"/>
</dbReference>
<dbReference type="GO" id="GO:0070180">
    <property type="term" value="F:large ribosomal subunit rRNA binding"/>
    <property type="evidence" value="ECO:0007669"/>
    <property type="project" value="UniProtKB-UniRule"/>
</dbReference>
<dbReference type="GO" id="GO:0006412">
    <property type="term" value="P:translation"/>
    <property type="evidence" value="ECO:0007669"/>
    <property type="project" value="UniProtKB-UniRule"/>
</dbReference>
<dbReference type="CDD" id="cd05797">
    <property type="entry name" value="Ribosomal_L10"/>
    <property type="match status" value="1"/>
</dbReference>
<dbReference type="Gene3D" id="3.30.70.1730">
    <property type="match status" value="1"/>
</dbReference>
<dbReference type="HAMAP" id="MF_00362">
    <property type="entry name" value="Ribosomal_uL10"/>
    <property type="match status" value="1"/>
</dbReference>
<dbReference type="InterPro" id="IPR001790">
    <property type="entry name" value="Ribosomal_uL10"/>
</dbReference>
<dbReference type="InterPro" id="IPR043141">
    <property type="entry name" value="Ribosomal_uL10-like_sf"/>
</dbReference>
<dbReference type="InterPro" id="IPR022973">
    <property type="entry name" value="Ribosomal_uL10_bac"/>
</dbReference>
<dbReference type="InterPro" id="IPR047865">
    <property type="entry name" value="Ribosomal_uL10_bac_type"/>
</dbReference>
<dbReference type="NCBIfam" id="NF000955">
    <property type="entry name" value="PRK00099.1-1"/>
    <property type="match status" value="1"/>
</dbReference>
<dbReference type="PANTHER" id="PTHR11560">
    <property type="entry name" value="39S RIBOSOMAL PROTEIN L10, MITOCHONDRIAL"/>
    <property type="match status" value="1"/>
</dbReference>
<dbReference type="Pfam" id="PF00466">
    <property type="entry name" value="Ribosomal_L10"/>
    <property type="match status" value="1"/>
</dbReference>
<dbReference type="SUPFAM" id="SSF160369">
    <property type="entry name" value="Ribosomal protein L10-like"/>
    <property type="match status" value="1"/>
</dbReference>
<organism>
    <name type="scientific">Anaeromyxobacter sp. (strain K)</name>
    <dbReference type="NCBI Taxonomy" id="447217"/>
    <lineage>
        <taxon>Bacteria</taxon>
        <taxon>Pseudomonadati</taxon>
        <taxon>Myxococcota</taxon>
        <taxon>Myxococcia</taxon>
        <taxon>Myxococcales</taxon>
        <taxon>Cystobacterineae</taxon>
        <taxon>Anaeromyxobacteraceae</taxon>
        <taxon>Anaeromyxobacter</taxon>
    </lineage>
</organism>